<sequence length="156" mass="17566">MSRRNAAEKRPVLPDPQFNNRLATMMVARLMKHGKKSTAQKILSQAFGLINERTGGDPIELFETAIKNATPLVEVRARRVGGATYQVPMEVRQERGTAMALRWLVNFSRSRNGRSMAHKLAGELMDAANEAGNAVRKREETHKMAEANKAFAHYRY</sequence>
<feature type="chain" id="PRO_0000124319" description="Small ribosomal subunit protein uS7">
    <location>
        <begin position="1"/>
        <end position="156"/>
    </location>
</feature>
<proteinExistence type="inferred from homology"/>
<evidence type="ECO:0000255" key="1">
    <source>
        <dbReference type="HAMAP-Rule" id="MF_00480"/>
    </source>
</evidence>
<evidence type="ECO:0000305" key="2"/>
<dbReference type="EMBL" id="AE017126">
    <property type="protein sequence ID" value="AAQ00710.1"/>
    <property type="molecule type" value="Genomic_DNA"/>
</dbReference>
<dbReference type="RefSeq" id="NP_876057.1">
    <property type="nucleotide sequence ID" value="NC_005042.1"/>
</dbReference>
<dbReference type="RefSeq" id="WP_011125815.1">
    <property type="nucleotide sequence ID" value="NC_005042.1"/>
</dbReference>
<dbReference type="SMR" id="Q7VA03"/>
<dbReference type="STRING" id="167539.Pro_1666"/>
<dbReference type="EnsemblBacteria" id="AAQ00710">
    <property type="protein sequence ID" value="AAQ00710"/>
    <property type="gene ID" value="Pro_1666"/>
</dbReference>
<dbReference type="KEGG" id="pma:Pro_1666"/>
<dbReference type="PATRIC" id="fig|167539.5.peg.1760"/>
<dbReference type="eggNOG" id="COG0049">
    <property type="taxonomic scope" value="Bacteria"/>
</dbReference>
<dbReference type="HOGENOM" id="CLU_072226_1_1_3"/>
<dbReference type="OrthoDB" id="9807653at2"/>
<dbReference type="Proteomes" id="UP000001420">
    <property type="component" value="Chromosome"/>
</dbReference>
<dbReference type="GO" id="GO:0015935">
    <property type="term" value="C:small ribosomal subunit"/>
    <property type="evidence" value="ECO:0007669"/>
    <property type="project" value="InterPro"/>
</dbReference>
<dbReference type="GO" id="GO:0019843">
    <property type="term" value="F:rRNA binding"/>
    <property type="evidence" value="ECO:0007669"/>
    <property type="project" value="UniProtKB-UniRule"/>
</dbReference>
<dbReference type="GO" id="GO:0003735">
    <property type="term" value="F:structural constituent of ribosome"/>
    <property type="evidence" value="ECO:0007669"/>
    <property type="project" value="InterPro"/>
</dbReference>
<dbReference type="GO" id="GO:0000049">
    <property type="term" value="F:tRNA binding"/>
    <property type="evidence" value="ECO:0007669"/>
    <property type="project" value="UniProtKB-UniRule"/>
</dbReference>
<dbReference type="GO" id="GO:0006412">
    <property type="term" value="P:translation"/>
    <property type="evidence" value="ECO:0007669"/>
    <property type="project" value="UniProtKB-UniRule"/>
</dbReference>
<dbReference type="CDD" id="cd14871">
    <property type="entry name" value="uS7_Chloroplast"/>
    <property type="match status" value="1"/>
</dbReference>
<dbReference type="FunFam" id="1.10.455.10:FF:000001">
    <property type="entry name" value="30S ribosomal protein S7"/>
    <property type="match status" value="1"/>
</dbReference>
<dbReference type="Gene3D" id="1.10.455.10">
    <property type="entry name" value="Ribosomal protein S7 domain"/>
    <property type="match status" value="1"/>
</dbReference>
<dbReference type="HAMAP" id="MF_00480_B">
    <property type="entry name" value="Ribosomal_uS7_B"/>
    <property type="match status" value="1"/>
</dbReference>
<dbReference type="InterPro" id="IPR000235">
    <property type="entry name" value="Ribosomal_uS7"/>
</dbReference>
<dbReference type="InterPro" id="IPR005717">
    <property type="entry name" value="Ribosomal_uS7_bac/org-type"/>
</dbReference>
<dbReference type="InterPro" id="IPR020606">
    <property type="entry name" value="Ribosomal_uS7_CS"/>
</dbReference>
<dbReference type="InterPro" id="IPR023798">
    <property type="entry name" value="Ribosomal_uS7_dom"/>
</dbReference>
<dbReference type="InterPro" id="IPR036823">
    <property type="entry name" value="Ribosomal_uS7_dom_sf"/>
</dbReference>
<dbReference type="NCBIfam" id="TIGR01029">
    <property type="entry name" value="rpsG_bact"/>
    <property type="match status" value="1"/>
</dbReference>
<dbReference type="PANTHER" id="PTHR11205">
    <property type="entry name" value="RIBOSOMAL PROTEIN S7"/>
    <property type="match status" value="1"/>
</dbReference>
<dbReference type="Pfam" id="PF00177">
    <property type="entry name" value="Ribosomal_S7"/>
    <property type="match status" value="1"/>
</dbReference>
<dbReference type="PIRSF" id="PIRSF002122">
    <property type="entry name" value="RPS7p_RPS7a_RPS5e_RPS7o"/>
    <property type="match status" value="1"/>
</dbReference>
<dbReference type="SUPFAM" id="SSF47973">
    <property type="entry name" value="Ribosomal protein S7"/>
    <property type="match status" value="1"/>
</dbReference>
<dbReference type="PROSITE" id="PS00052">
    <property type="entry name" value="RIBOSOMAL_S7"/>
    <property type="match status" value="1"/>
</dbReference>
<name>RS7_PROMA</name>
<protein>
    <recommendedName>
        <fullName evidence="1">Small ribosomal subunit protein uS7</fullName>
    </recommendedName>
    <alternativeName>
        <fullName evidence="2">30S ribosomal protein S7</fullName>
    </alternativeName>
</protein>
<reference key="1">
    <citation type="journal article" date="2003" name="Proc. Natl. Acad. Sci. U.S.A.">
        <title>Genome sequence of the cyanobacterium Prochlorococcus marinus SS120, a nearly minimal oxyphototrophic genome.</title>
        <authorList>
            <person name="Dufresne A."/>
            <person name="Salanoubat M."/>
            <person name="Partensky F."/>
            <person name="Artiguenave F."/>
            <person name="Axmann I.M."/>
            <person name="Barbe V."/>
            <person name="Duprat S."/>
            <person name="Galperin M.Y."/>
            <person name="Koonin E.V."/>
            <person name="Le Gall F."/>
            <person name="Makarova K.S."/>
            <person name="Ostrowski M."/>
            <person name="Oztas S."/>
            <person name="Robert C."/>
            <person name="Rogozin I.B."/>
            <person name="Scanlan D.J."/>
            <person name="Tandeau de Marsac N."/>
            <person name="Weissenbach J."/>
            <person name="Wincker P."/>
            <person name="Wolf Y.I."/>
            <person name="Hess W.R."/>
        </authorList>
    </citation>
    <scope>NUCLEOTIDE SEQUENCE [LARGE SCALE GENOMIC DNA]</scope>
    <source>
        <strain>SARG / CCMP1375 / SS120</strain>
    </source>
</reference>
<accession>Q7VA03</accession>
<keyword id="KW-1185">Reference proteome</keyword>
<keyword id="KW-0687">Ribonucleoprotein</keyword>
<keyword id="KW-0689">Ribosomal protein</keyword>
<keyword id="KW-0694">RNA-binding</keyword>
<keyword id="KW-0699">rRNA-binding</keyword>
<keyword id="KW-0820">tRNA-binding</keyword>
<organism>
    <name type="scientific">Prochlorococcus marinus (strain SARG / CCMP1375 / SS120)</name>
    <dbReference type="NCBI Taxonomy" id="167539"/>
    <lineage>
        <taxon>Bacteria</taxon>
        <taxon>Bacillati</taxon>
        <taxon>Cyanobacteriota</taxon>
        <taxon>Cyanophyceae</taxon>
        <taxon>Synechococcales</taxon>
        <taxon>Prochlorococcaceae</taxon>
        <taxon>Prochlorococcus</taxon>
    </lineage>
</organism>
<comment type="function">
    <text evidence="1">One of the primary rRNA binding proteins, it binds directly to 16S rRNA where it nucleates assembly of the head domain of the 30S subunit. Is located at the subunit interface close to the decoding center, probably blocks exit of the E-site tRNA.</text>
</comment>
<comment type="subunit">
    <text evidence="1">Part of the 30S ribosomal subunit. Contacts proteins S9 and S11.</text>
</comment>
<comment type="similarity">
    <text evidence="1">Belongs to the universal ribosomal protein uS7 family.</text>
</comment>
<gene>
    <name evidence="1" type="primary">rpsG</name>
    <name evidence="1" type="synonym">rps7</name>
    <name type="ordered locus">Pro_1666</name>
</gene>